<gene>
    <name type="ORF">SPBC56F2.08c</name>
</gene>
<organism>
    <name type="scientific">Schizosaccharomyces pombe (strain 972 / ATCC 24843)</name>
    <name type="common">Fission yeast</name>
    <dbReference type="NCBI Taxonomy" id="284812"/>
    <lineage>
        <taxon>Eukaryota</taxon>
        <taxon>Fungi</taxon>
        <taxon>Dikarya</taxon>
        <taxon>Ascomycota</taxon>
        <taxon>Taphrinomycotina</taxon>
        <taxon>Schizosaccharomycetes</taxon>
        <taxon>Schizosaccharomycetales</taxon>
        <taxon>Schizosaccharomycetaceae</taxon>
        <taxon>Schizosaccharomyces</taxon>
    </lineage>
</organism>
<evidence type="ECO:0000255" key="1">
    <source>
        <dbReference type="PROSITE-ProRule" id="PRU00176"/>
    </source>
</evidence>
<evidence type="ECO:0000255" key="2">
    <source>
        <dbReference type="PROSITE-ProRule" id="PRU00318"/>
    </source>
</evidence>
<evidence type="ECO:0000269" key="3">
    <source>
    </source>
</evidence>
<evidence type="ECO:0000269" key="4">
    <source>
    </source>
</evidence>
<evidence type="ECO:0007829" key="5">
    <source>
        <dbReference type="PDB" id="6NWW"/>
    </source>
</evidence>
<evidence type="ECO:0007829" key="6">
    <source>
        <dbReference type="PDB" id="6NX5"/>
    </source>
</evidence>
<evidence type="ECO:0007829" key="7">
    <source>
        <dbReference type="PDB" id="6NY5"/>
    </source>
</evidence>
<proteinExistence type="evidence at protein level"/>
<accession>O60059</accession>
<keyword id="KW-0002">3D-structure</keyword>
<keyword id="KW-0963">Cytoplasm</keyword>
<keyword id="KW-0597">Phosphoprotein</keyword>
<keyword id="KW-1185">Reference proteome</keyword>
<keyword id="KW-0677">Repeat</keyword>
<keyword id="KW-0694">RNA-binding</keyword>
<protein>
    <recommendedName>
        <fullName>Pumilio domain-containing protein C56F2.08c</fullName>
    </recommendedName>
</protein>
<name>YG58_SCHPO</name>
<comment type="subcellular location">
    <subcellularLocation>
        <location evidence="3">Cytoplasm</location>
    </subcellularLocation>
</comment>
<dbReference type="EMBL" id="CU329671">
    <property type="protein sequence ID" value="CAA18887.1"/>
    <property type="molecule type" value="Genomic_DNA"/>
</dbReference>
<dbReference type="PIR" id="T40536">
    <property type="entry name" value="T40536"/>
</dbReference>
<dbReference type="PDB" id="6NWW">
    <property type="method" value="X-ray"/>
    <property type="resolution" value="2.06 A"/>
    <property type="chains" value="A/B/C/D=1-79"/>
</dbReference>
<dbReference type="PDB" id="6NX5">
    <property type="method" value="X-ray"/>
    <property type="resolution" value="1.55 A"/>
    <property type="chains" value="A/B/C/D=1-79"/>
</dbReference>
<dbReference type="PDB" id="6NY5">
    <property type="method" value="X-ray"/>
    <property type="resolution" value="3.00 A"/>
    <property type="chains" value="A/B=109-485"/>
</dbReference>
<dbReference type="PDBsum" id="6NWW"/>
<dbReference type="PDBsum" id="6NX5"/>
<dbReference type="PDBsum" id="6NY5"/>
<dbReference type="SMR" id="O60059"/>
<dbReference type="BioGRID" id="277429">
    <property type="interactions" value="185"/>
</dbReference>
<dbReference type="FunCoup" id="O60059">
    <property type="interactions" value="11"/>
</dbReference>
<dbReference type="STRING" id="284812.O60059"/>
<dbReference type="iPTMnet" id="O60059"/>
<dbReference type="PaxDb" id="4896-SPBC56F2.08c.1"/>
<dbReference type="EnsemblFungi" id="SPBC56F2.08c.1">
    <property type="protein sequence ID" value="SPBC56F2.08c.1:pep"/>
    <property type="gene ID" value="SPBC56F2.08c"/>
</dbReference>
<dbReference type="KEGG" id="spo:2540913"/>
<dbReference type="PomBase" id="SPBC56F2.08c"/>
<dbReference type="VEuPathDB" id="FungiDB:SPBC56F2.08c"/>
<dbReference type="eggNOG" id="KOG4574">
    <property type="taxonomic scope" value="Eukaryota"/>
</dbReference>
<dbReference type="HOGENOM" id="CLU_415129_0_0_1"/>
<dbReference type="InParanoid" id="O60059"/>
<dbReference type="OMA" id="MARHCCE"/>
<dbReference type="PhylomeDB" id="O60059"/>
<dbReference type="PRO" id="PR:O60059"/>
<dbReference type="Proteomes" id="UP000002485">
    <property type="component" value="Chromosome II"/>
</dbReference>
<dbReference type="GO" id="GO:0005737">
    <property type="term" value="C:cytoplasm"/>
    <property type="evidence" value="ECO:0007005"/>
    <property type="project" value="PomBase"/>
</dbReference>
<dbReference type="GO" id="GO:0010494">
    <property type="term" value="C:cytoplasmic stress granule"/>
    <property type="evidence" value="ECO:0000269"/>
    <property type="project" value="PomBase"/>
</dbReference>
<dbReference type="GO" id="GO:0000932">
    <property type="term" value="C:P-body"/>
    <property type="evidence" value="ECO:0000269"/>
    <property type="project" value="PomBase"/>
</dbReference>
<dbReference type="GO" id="GO:0035925">
    <property type="term" value="F:mRNA 3'-UTR AU-rich region binding"/>
    <property type="evidence" value="ECO:0000314"/>
    <property type="project" value="PomBase"/>
</dbReference>
<dbReference type="GO" id="GO:0000288">
    <property type="term" value="P:nuclear-transcribed mRNA catabolic process, deadenylation-dependent decay"/>
    <property type="evidence" value="ECO:0000318"/>
    <property type="project" value="GO_Central"/>
</dbReference>
<dbReference type="CDD" id="cd12340">
    <property type="entry name" value="RBD_RRM1_NPL3"/>
    <property type="match status" value="1"/>
</dbReference>
<dbReference type="FunFam" id="1.25.10.10:FF:000475">
    <property type="entry name" value="Unplaced genomic scaffold supercont1.2, whole genome shotgun sequence"/>
    <property type="match status" value="1"/>
</dbReference>
<dbReference type="Gene3D" id="3.30.70.330">
    <property type="match status" value="1"/>
</dbReference>
<dbReference type="Gene3D" id="1.25.10.10">
    <property type="entry name" value="Leucine-rich Repeat Variant"/>
    <property type="match status" value="1"/>
</dbReference>
<dbReference type="InterPro" id="IPR011989">
    <property type="entry name" value="ARM-like"/>
</dbReference>
<dbReference type="InterPro" id="IPR016024">
    <property type="entry name" value="ARM-type_fold"/>
</dbReference>
<dbReference type="InterPro" id="IPR034166">
    <property type="entry name" value="Npl3_RRM1"/>
</dbReference>
<dbReference type="InterPro" id="IPR012677">
    <property type="entry name" value="Nucleotide-bd_a/b_plait_sf"/>
</dbReference>
<dbReference type="InterPro" id="IPR033133">
    <property type="entry name" value="PUM-HD"/>
</dbReference>
<dbReference type="InterPro" id="IPR052645">
    <property type="entry name" value="Pumilio_domain_protein"/>
</dbReference>
<dbReference type="InterPro" id="IPR001313">
    <property type="entry name" value="Pumilio_RNA-bd_rpt"/>
</dbReference>
<dbReference type="InterPro" id="IPR035979">
    <property type="entry name" value="RBD_domain_sf"/>
</dbReference>
<dbReference type="InterPro" id="IPR000504">
    <property type="entry name" value="RRM_dom"/>
</dbReference>
<dbReference type="PANTHER" id="PTHR47093">
    <property type="entry name" value="PROTEIN JSN1-RELATED"/>
    <property type="match status" value="1"/>
</dbReference>
<dbReference type="PANTHER" id="PTHR47093:SF1">
    <property type="entry name" value="PROTEIN JSN1-RELATED"/>
    <property type="match status" value="1"/>
</dbReference>
<dbReference type="Pfam" id="PF00806">
    <property type="entry name" value="PUF"/>
    <property type="match status" value="3"/>
</dbReference>
<dbReference type="Pfam" id="PF00076">
    <property type="entry name" value="RRM_1"/>
    <property type="match status" value="1"/>
</dbReference>
<dbReference type="SMART" id="SM00025">
    <property type="entry name" value="Pumilio"/>
    <property type="match status" value="5"/>
</dbReference>
<dbReference type="SMART" id="SM00360">
    <property type="entry name" value="RRM"/>
    <property type="match status" value="1"/>
</dbReference>
<dbReference type="SUPFAM" id="SSF48371">
    <property type="entry name" value="ARM repeat"/>
    <property type="match status" value="1"/>
</dbReference>
<dbReference type="SUPFAM" id="SSF54928">
    <property type="entry name" value="RNA-binding domain, RBD"/>
    <property type="match status" value="1"/>
</dbReference>
<dbReference type="PROSITE" id="PS50302">
    <property type="entry name" value="PUM"/>
    <property type="match status" value="4"/>
</dbReference>
<dbReference type="PROSITE" id="PS50303">
    <property type="entry name" value="PUM_HD"/>
    <property type="match status" value="1"/>
</dbReference>
<dbReference type="PROSITE" id="PS50102">
    <property type="entry name" value="RRM"/>
    <property type="match status" value="1"/>
</dbReference>
<feature type="chain" id="PRO_0000310365" description="Pumilio domain-containing protein C56F2.08c">
    <location>
        <begin position="1"/>
        <end position="661"/>
    </location>
</feature>
<feature type="domain" description="RRM" evidence="1">
    <location>
        <begin position="1"/>
        <end position="74"/>
    </location>
</feature>
<feature type="domain" description="PUM-HD" evidence="2">
    <location>
        <begin position="129"/>
        <end position="482"/>
    </location>
</feature>
<feature type="repeat" description="Pumilio 1">
    <location>
        <begin position="191"/>
        <end position="226"/>
    </location>
</feature>
<feature type="repeat" description="Pumilio 2">
    <location>
        <begin position="227"/>
        <end position="263"/>
    </location>
</feature>
<feature type="repeat" description="Pumilio 3">
    <location>
        <begin position="264"/>
        <end position="302"/>
    </location>
</feature>
<feature type="repeat" description="Pumilio 4">
    <location>
        <begin position="374"/>
        <end position="410"/>
    </location>
</feature>
<feature type="modified residue" description="Phosphoserine" evidence="4">
    <location>
        <position position="102"/>
    </location>
</feature>
<feature type="modified residue" description="Phosphothreonine" evidence="4">
    <location>
        <position position="104"/>
    </location>
</feature>
<feature type="modified residue" description="Phosphoserine" evidence="4">
    <location>
        <position position="105"/>
    </location>
</feature>
<feature type="modified residue" description="Phosphoserine" evidence="4">
    <location>
        <position position="482"/>
    </location>
</feature>
<feature type="modified residue" description="Phosphoserine" evidence="4">
    <location>
        <position position="486"/>
    </location>
</feature>
<feature type="modified residue" description="Phosphoserine" evidence="4">
    <location>
        <position position="488"/>
    </location>
</feature>
<feature type="modified residue" description="Phosphoserine" evidence="4">
    <location>
        <position position="490"/>
    </location>
</feature>
<feature type="strand" evidence="6">
    <location>
        <begin position="1"/>
        <end position="5"/>
    </location>
</feature>
<feature type="helix" evidence="6">
    <location>
        <begin position="13"/>
        <end position="20"/>
    </location>
</feature>
<feature type="turn" evidence="5">
    <location>
        <begin position="21"/>
        <end position="23"/>
    </location>
</feature>
<feature type="strand" evidence="6">
    <location>
        <begin position="26"/>
        <end position="31"/>
    </location>
</feature>
<feature type="helix" evidence="5">
    <location>
        <begin position="33"/>
        <end position="35"/>
    </location>
</feature>
<feature type="strand" evidence="6">
    <location>
        <begin position="38"/>
        <end position="43"/>
    </location>
</feature>
<feature type="helix" evidence="6">
    <location>
        <begin position="45"/>
        <end position="55"/>
    </location>
</feature>
<feature type="turn" evidence="5">
    <location>
        <begin position="61"/>
        <end position="63"/>
    </location>
</feature>
<feature type="strand" evidence="6">
    <location>
        <begin position="67"/>
        <end position="71"/>
    </location>
</feature>
<feature type="helix" evidence="7">
    <location>
        <begin position="110"/>
        <end position="113"/>
    </location>
</feature>
<feature type="helix" evidence="7">
    <location>
        <begin position="115"/>
        <end position="123"/>
    </location>
</feature>
<feature type="helix" evidence="7">
    <location>
        <begin position="131"/>
        <end position="143"/>
    </location>
</feature>
<feature type="helix" evidence="7">
    <location>
        <begin position="161"/>
        <end position="176"/>
    </location>
</feature>
<feature type="helix" evidence="7">
    <location>
        <begin position="182"/>
        <end position="191"/>
    </location>
</feature>
<feature type="turn" evidence="7">
    <location>
        <begin position="192"/>
        <end position="195"/>
    </location>
</feature>
<feature type="helix" evidence="7">
    <location>
        <begin position="196"/>
        <end position="199"/>
    </location>
</feature>
<feature type="helix" evidence="7">
    <location>
        <begin position="205"/>
        <end position="215"/>
    </location>
</feature>
<feature type="helix" evidence="7">
    <location>
        <begin position="218"/>
        <end position="228"/>
    </location>
</feature>
<feature type="helix" evidence="7">
    <location>
        <begin position="229"/>
        <end position="231"/>
    </location>
</feature>
<feature type="helix" evidence="7">
    <location>
        <begin position="232"/>
        <end position="236"/>
    </location>
</feature>
<feature type="helix" evidence="7">
    <location>
        <begin position="241"/>
        <end position="250"/>
    </location>
</feature>
<feature type="helix" evidence="7">
    <location>
        <begin position="255"/>
        <end position="265"/>
    </location>
</feature>
<feature type="helix" evidence="7">
    <location>
        <begin position="266"/>
        <end position="268"/>
    </location>
</feature>
<feature type="helix" evidence="7">
    <location>
        <begin position="269"/>
        <end position="274"/>
    </location>
</feature>
<feature type="helix" evidence="7">
    <location>
        <begin position="278"/>
        <end position="284"/>
    </location>
</feature>
<feature type="helix" evidence="7">
    <location>
        <begin position="285"/>
        <end position="288"/>
    </location>
</feature>
<feature type="turn" evidence="7">
    <location>
        <begin position="290"/>
        <end position="293"/>
    </location>
</feature>
<feature type="helix" evidence="7">
    <location>
        <begin position="294"/>
        <end position="302"/>
    </location>
</feature>
<feature type="helix" evidence="7">
    <location>
        <begin position="304"/>
        <end position="308"/>
    </location>
</feature>
<feature type="helix" evidence="7">
    <location>
        <begin position="311"/>
        <end position="322"/>
    </location>
</feature>
<feature type="helix" evidence="7">
    <location>
        <begin position="328"/>
        <end position="339"/>
    </location>
</feature>
<feature type="helix" evidence="7">
    <location>
        <begin position="342"/>
        <end position="345"/>
    </location>
</feature>
<feature type="helix" evidence="7">
    <location>
        <begin position="349"/>
        <end position="359"/>
    </location>
</feature>
<feature type="helix" evidence="7">
    <location>
        <begin position="367"/>
        <end position="375"/>
    </location>
</feature>
<feature type="helix" evidence="7">
    <location>
        <begin position="376"/>
        <end position="378"/>
    </location>
</feature>
<feature type="helix" evidence="7">
    <location>
        <begin position="379"/>
        <end position="382"/>
    </location>
</feature>
<feature type="helix" evidence="7">
    <location>
        <begin position="388"/>
        <end position="397"/>
    </location>
</feature>
<feature type="helix" evidence="7">
    <location>
        <begin position="402"/>
        <end position="413"/>
    </location>
</feature>
<feature type="helix" evidence="7">
    <location>
        <begin position="416"/>
        <end position="418"/>
    </location>
</feature>
<feature type="helix" evidence="7">
    <location>
        <begin position="419"/>
        <end position="426"/>
    </location>
</feature>
<feature type="strand" evidence="7">
    <location>
        <begin position="428"/>
        <end position="430"/>
    </location>
</feature>
<feature type="helix" evidence="7">
    <location>
        <begin position="431"/>
        <end position="439"/>
    </location>
</feature>
<feature type="helix" evidence="7">
    <location>
        <begin position="447"/>
        <end position="463"/>
    </location>
</feature>
<feature type="turn" evidence="7">
    <location>
        <begin position="469"/>
        <end position="471"/>
    </location>
</feature>
<feature type="helix" evidence="7">
    <location>
        <begin position="472"/>
        <end position="476"/>
    </location>
</feature>
<sequence>MLYVSNLPVGTSSSAIHALFSAYGNVKDIWMLSPDNSAIVSYESLSSAIVARDALHNRPVFENHGPVQVMLAKPSSNYEPGNITAAVSPPASTSSKDGVVCSPTSTGASQLLKSRVDILEVARQFEMRINLDIVDSMIASAIENNKVATEILPPVETLRSRQFEASKLREIRKNIDSGFYTQEEIEVIARSMLDDVAELSSDYLGNTVVQKFFEYCSDPIKEAMLERIAPYLAAIGIHKNGTWAAQKIIDVASTEKQMDLIVKHLRPYTALLYFDQFGNYVAQCCLRFKYPKNTFLFEVMARHCCEIGQSRFGARAIRACLENENATFEQQALVVASIIINSHLLATNSNGMLLLTWLLDNSFFRNRHRLLAIHLATHLHTTCTHKLASTLIFKLINNKQEPESRNLLLKNLFFSEKDNVLTYILQDQAVGPSFIHKVITYPSIGREFLAQFHLVIKRVLINIHAQPNAVYCRLMEEVGMTSKSISPSLSGISAPSASVDSSASRLARDFGSLSLSSNSLLGSLGGLESTPAYPSYPSHIPLGTASLPLKGNLYQISRSDDIKSGAPVLDTSSLVNPTLAKSASLNNSSLLNPSSSLLRREVPAGKLTMPAYPYTTQLMNHTAGADYGLPRLSSKLPQVFPGNYPRLQQSLFPRQGELRFN</sequence>
<reference key="1">
    <citation type="journal article" date="2002" name="Nature">
        <title>The genome sequence of Schizosaccharomyces pombe.</title>
        <authorList>
            <person name="Wood V."/>
            <person name="Gwilliam R."/>
            <person name="Rajandream M.A."/>
            <person name="Lyne M.H."/>
            <person name="Lyne R."/>
            <person name="Stewart A."/>
            <person name="Sgouros J.G."/>
            <person name="Peat N."/>
            <person name="Hayles J."/>
            <person name="Baker S.G."/>
            <person name="Basham D."/>
            <person name="Bowman S."/>
            <person name="Brooks K."/>
            <person name="Brown D."/>
            <person name="Brown S."/>
            <person name="Chillingworth T."/>
            <person name="Churcher C.M."/>
            <person name="Collins M."/>
            <person name="Connor R."/>
            <person name="Cronin A."/>
            <person name="Davis P."/>
            <person name="Feltwell T."/>
            <person name="Fraser A."/>
            <person name="Gentles S."/>
            <person name="Goble A."/>
            <person name="Hamlin N."/>
            <person name="Harris D.E."/>
            <person name="Hidalgo J."/>
            <person name="Hodgson G."/>
            <person name="Holroyd S."/>
            <person name="Hornsby T."/>
            <person name="Howarth S."/>
            <person name="Huckle E.J."/>
            <person name="Hunt S."/>
            <person name="Jagels K."/>
            <person name="James K.D."/>
            <person name="Jones L."/>
            <person name="Jones M."/>
            <person name="Leather S."/>
            <person name="McDonald S."/>
            <person name="McLean J."/>
            <person name="Mooney P."/>
            <person name="Moule S."/>
            <person name="Mungall K.L."/>
            <person name="Murphy L.D."/>
            <person name="Niblett D."/>
            <person name="Odell C."/>
            <person name="Oliver K."/>
            <person name="O'Neil S."/>
            <person name="Pearson D."/>
            <person name="Quail M.A."/>
            <person name="Rabbinowitsch E."/>
            <person name="Rutherford K.M."/>
            <person name="Rutter S."/>
            <person name="Saunders D."/>
            <person name="Seeger K."/>
            <person name="Sharp S."/>
            <person name="Skelton J."/>
            <person name="Simmonds M.N."/>
            <person name="Squares R."/>
            <person name="Squares S."/>
            <person name="Stevens K."/>
            <person name="Taylor K."/>
            <person name="Taylor R.G."/>
            <person name="Tivey A."/>
            <person name="Walsh S.V."/>
            <person name="Warren T."/>
            <person name="Whitehead S."/>
            <person name="Woodward J.R."/>
            <person name="Volckaert G."/>
            <person name="Aert R."/>
            <person name="Robben J."/>
            <person name="Grymonprez B."/>
            <person name="Weltjens I."/>
            <person name="Vanstreels E."/>
            <person name="Rieger M."/>
            <person name="Schaefer M."/>
            <person name="Mueller-Auer S."/>
            <person name="Gabel C."/>
            <person name="Fuchs M."/>
            <person name="Duesterhoeft A."/>
            <person name="Fritzc C."/>
            <person name="Holzer E."/>
            <person name="Moestl D."/>
            <person name="Hilbert H."/>
            <person name="Borzym K."/>
            <person name="Langer I."/>
            <person name="Beck A."/>
            <person name="Lehrach H."/>
            <person name="Reinhardt R."/>
            <person name="Pohl T.M."/>
            <person name="Eger P."/>
            <person name="Zimmermann W."/>
            <person name="Wedler H."/>
            <person name="Wambutt R."/>
            <person name="Purnelle B."/>
            <person name="Goffeau A."/>
            <person name="Cadieu E."/>
            <person name="Dreano S."/>
            <person name="Gloux S."/>
            <person name="Lelaure V."/>
            <person name="Mottier S."/>
            <person name="Galibert F."/>
            <person name="Aves S.J."/>
            <person name="Xiang Z."/>
            <person name="Hunt C."/>
            <person name="Moore K."/>
            <person name="Hurst S.M."/>
            <person name="Lucas M."/>
            <person name="Rochet M."/>
            <person name="Gaillardin C."/>
            <person name="Tallada V.A."/>
            <person name="Garzon A."/>
            <person name="Thode G."/>
            <person name="Daga R.R."/>
            <person name="Cruzado L."/>
            <person name="Jimenez J."/>
            <person name="Sanchez M."/>
            <person name="del Rey F."/>
            <person name="Benito J."/>
            <person name="Dominguez A."/>
            <person name="Revuelta J.L."/>
            <person name="Moreno S."/>
            <person name="Armstrong J."/>
            <person name="Forsburg S.L."/>
            <person name="Cerutti L."/>
            <person name="Lowe T."/>
            <person name="McCombie W.R."/>
            <person name="Paulsen I."/>
            <person name="Potashkin J."/>
            <person name="Shpakovski G.V."/>
            <person name="Ussery D."/>
            <person name="Barrell B.G."/>
            <person name="Nurse P."/>
        </authorList>
    </citation>
    <scope>NUCLEOTIDE SEQUENCE [LARGE SCALE GENOMIC DNA]</scope>
    <source>
        <strain>972 / ATCC 24843</strain>
    </source>
</reference>
<reference key="2">
    <citation type="journal article" date="2006" name="Nat. Biotechnol.">
        <title>ORFeome cloning and global analysis of protein localization in the fission yeast Schizosaccharomyces pombe.</title>
        <authorList>
            <person name="Matsuyama A."/>
            <person name="Arai R."/>
            <person name="Yashiroda Y."/>
            <person name="Shirai A."/>
            <person name="Kamata A."/>
            <person name="Sekido S."/>
            <person name="Kobayashi Y."/>
            <person name="Hashimoto A."/>
            <person name="Hamamoto M."/>
            <person name="Hiraoka Y."/>
            <person name="Horinouchi S."/>
            <person name="Yoshida M."/>
        </authorList>
    </citation>
    <scope>SUBCELLULAR LOCATION [LARGE SCALE ANALYSIS]</scope>
</reference>
<reference key="3">
    <citation type="journal article" date="2008" name="J. Proteome Res.">
        <title>Phosphoproteome analysis of fission yeast.</title>
        <authorList>
            <person name="Wilson-Grady J.T."/>
            <person name="Villen J."/>
            <person name="Gygi S.P."/>
        </authorList>
    </citation>
    <scope>PHOSPHORYLATION [LARGE SCALE ANALYSIS] AT SER-102; THR-104; SER-105; SER-482; SER-486; SER-488 AND SER-490</scope>
    <scope>IDENTIFICATION BY MASS SPECTROMETRY</scope>
</reference>